<protein>
    <recommendedName>
        <fullName>Cell division protein ZapA</fullName>
    </recommendedName>
    <alternativeName>
        <fullName>Z ring-associated protein ZapA</fullName>
    </alternativeName>
</protein>
<gene>
    <name type="primary">zapA</name>
    <name type="ordered locus">ABC2678</name>
</gene>
<name>ZAPA_SHOC1</name>
<accession>Q5WEJ7</accession>
<reference key="1">
    <citation type="submission" date="2003-10" db="EMBL/GenBank/DDBJ databases">
        <title>The complete genome sequence of the alkaliphilic Bacillus clausii KSM-K16.</title>
        <authorList>
            <person name="Takaki Y."/>
            <person name="Kageyama Y."/>
            <person name="Shimamura S."/>
            <person name="Suzuki H."/>
            <person name="Nishi S."/>
            <person name="Hatada Y."/>
            <person name="Kawai S."/>
            <person name="Ito S."/>
            <person name="Horikoshi K."/>
        </authorList>
    </citation>
    <scope>NUCLEOTIDE SEQUENCE [LARGE SCALE GENOMIC DNA]</scope>
    <source>
        <strain>KSM-K16</strain>
    </source>
</reference>
<sequence length="78" mass="9089">MEKNNNKKRATVRIQGQTYKVVSSEEPAHVKEVASYMNKKMEELKKRNPYLDSTKLAVLTALNIADEYLKLKRQYEGE</sequence>
<evidence type="ECO:0000250" key="1"/>
<evidence type="ECO:0000305" key="2"/>
<proteinExistence type="inferred from homology"/>
<comment type="function">
    <text evidence="1">Activator of cell division through the inhibition of FtsZ GTPase activity, therefore promoting FtsZ assembly into bundles of protofilaments necessary for the formation of the division Z ring. It is recruited early at mid-cell but it is not essential for cell division (By similarity).</text>
</comment>
<comment type="subunit">
    <text evidence="1">Homodimer. Interacts with FtsZ (By similarity).</text>
</comment>
<comment type="subcellular location">
    <subcellularLocation>
        <location evidence="1">Cytoplasm</location>
    </subcellularLocation>
    <text evidence="1">Localizes at mid-cell. In sporulating cells, localizes near the cell poles (By similarity).</text>
</comment>
<comment type="similarity">
    <text evidence="2">Belongs to the ZapA family. Type 2 subfamily.</text>
</comment>
<feature type="chain" id="PRO_0000345686" description="Cell division protein ZapA">
    <location>
        <begin position="1"/>
        <end position="78"/>
    </location>
</feature>
<keyword id="KW-0131">Cell cycle</keyword>
<keyword id="KW-0132">Cell division</keyword>
<keyword id="KW-0963">Cytoplasm</keyword>
<keyword id="KW-1185">Reference proteome</keyword>
<keyword id="KW-0717">Septation</keyword>
<dbReference type="EMBL" id="AP006627">
    <property type="protein sequence ID" value="BAD65213.1"/>
    <property type="molecule type" value="Genomic_DNA"/>
</dbReference>
<dbReference type="RefSeq" id="WP_011247521.1">
    <property type="nucleotide sequence ID" value="NC_006582.1"/>
</dbReference>
<dbReference type="SMR" id="Q5WEJ7"/>
<dbReference type="STRING" id="66692.ABC2678"/>
<dbReference type="KEGG" id="bcl:ABC2678"/>
<dbReference type="eggNOG" id="COG3027">
    <property type="taxonomic scope" value="Bacteria"/>
</dbReference>
<dbReference type="HOGENOM" id="CLU_116623_4_0_9"/>
<dbReference type="OrthoDB" id="9808604at2"/>
<dbReference type="Proteomes" id="UP000001168">
    <property type="component" value="Chromosome"/>
</dbReference>
<dbReference type="GO" id="GO:0032153">
    <property type="term" value="C:cell division site"/>
    <property type="evidence" value="ECO:0007669"/>
    <property type="project" value="TreeGrafter"/>
</dbReference>
<dbReference type="GO" id="GO:0030428">
    <property type="term" value="C:cell septum"/>
    <property type="evidence" value="ECO:0007669"/>
    <property type="project" value="TreeGrafter"/>
</dbReference>
<dbReference type="GO" id="GO:0005829">
    <property type="term" value="C:cytosol"/>
    <property type="evidence" value="ECO:0007669"/>
    <property type="project" value="TreeGrafter"/>
</dbReference>
<dbReference type="GO" id="GO:0000917">
    <property type="term" value="P:division septum assembly"/>
    <property type="evidence" value="ECO:0007669"/>
    <property type="project" value="UniProtKB-KW"/>
</dbReference>
<dbReference type="GO" id="GO:0043093">
    <property type="term" value="P:FtsZ-dependent cytokinesis"/>
    <property type="evidence" value="ECO:0007669"/>
    <property type="project" value="TreeGrafter"/>
</dbReference>
<dbReference type="GO" id="GO:0000921">
    <property type="term" value="P:septin ring assembly"/>
    <property type="evidence" value="ECO:0007669"/>
    <property type="project" value="TreeGrafter"/>
</dbReference>
<dbReference type="Gene3D" id="6.10.250.790">
    <property type="match status" value="1"/>
</dbReference>
<dbReference type="InterPro" id="IPR053712">
    <property type="entry name" value="Bac_CellDiv_Activator"/>
</dbReference>
<dbReference type="InterPro" id="IPR007838">
    <property type="entry name" value="Cell_div_ZapA-like"/>
</dbReference>
<dbReference type="InterPro" id="IPR036192">
    <property type="entry name" value="Cell_div_ZapA-like_sf"/>
</dbReference>
<dbReference type="NCBIfam" id="NF010724">
    <property type="entry name" value="PRK14126.1"/>
    <property type="match status" value="1"/>
</dbReference>
<dbReference type="PANTHER" id="PTHR34981">
    <property type="entry name" value="CELL DIVISION PROTEIN ZAPA"/>
    <property type="match status" value="1"/>
</dbReference>
<dbReference type="PANTHER" id="PTHR34981:SF1">
    <property type="entry name" value="CELL DIVISION PROTEIN ZAPA"/>
    <property type="match status" value="1"/>
</dbReference>
<dbReference type="Pfam" id="PF05164">
    <property type="entry name" value="ZapA"/>
    <property type="match status" value="1"/>
</dbReference>
<dbReference type="SUPFAM" id="SSF102829">
    <property type="entry name" value="Cell division protein ZapA-like"/>
    <property type="match status" value="1"/>
</dbReference>
<organism>
    <name type="scientific">Shouchella clausii (strain KSM-K16)</name>
    <name type="common">Alkalihalobacillus clausii</name>
    <dbReference type="NCBI Taxonomy" id="66692"/>
    <lineage>
        <taxon>Bacteria</taxon>
        <taxon>Bacillati</taxon>
        <taxon>Bacillota</taxon>
        <taxon>Bacilli</taxon>
        <taxon>Bacillales</taxon>
        <taxon>Bacillaceae</taxon>
        <taxon>Shouchella</taxon>
    </lineage>
</organism>